<name>PTH_CHLPD</name>
<keyword id="KW-0963">Cytoplasm</keyword>
<keyword id="KW-0378">Hydrolase</keyword>
<keyword id="KW-1185">Reference proteome</keyword>
<keyword id="KW-0694">RNA-binding</keyword>
<keyword id="KW-0820">tRNA-binding</keyword>
<organism>
    <name type="scientific">Chlorobium phaeobacteroides (strain DSM 266 / SMG 266 / 2430)</name>
    <dbReference type="NCBI Taxonomy" id="290317"/>
    <lineage>
        <taxon>Bacteria</taxon>
        <taxon>Pseudomonadati</taxon>
        <taxon>Chlorobiota</taxon>
        <taxon>Chlorobiia</taxon>
        <taxon>Chlorobiales</taxon>
        <taxon>Chlorobiaceae</taxon>
        <taxon>Chlorobium/Pelodictyon group</taxon>
        <taxon>Chlorobium</taxon>
    </lineage>
</organism>
<evidence type="ECO:0000255" key="1">
    <source>
        <dbReference type="HAMAP-Rule" id="MF_00083"/>
    </source>
</evidence>
<comment type="function">
    <text evidence="1">Hydrolyzes ribosome-free peptidyl-tRNAs (with 1 or more amino acids incorporated), which drop off the ribosome during protein synthesis, or as a result of ribosome stalling.</text>
</comment>
<comment type="function">
    <text evidence="1">Catalyzes the release of premature peptidyl moieties from peptidyl-tRNA molecules trapped in stalled 50S ribosomal subunits, and thus maintains levels of free tRNAs and 50S ribosomes.</text>
</comment>
<comment type="catalytic activity">
    <reaction evidence="1">
        <text>an N-acyl-L-alpha-aminoacyl-tRNA + H2O = an N-acyl-L-amino acid + a tRNA + H(+)</text>
        <dbReference type="Rhea" id="RHEA:54448"/>
        <dbReference type="Rhea" id="RHEA-COMP:10123"/>
        <dbReference type="Rhea" id="RHEA-COMP:13883"/>
        <dbReference type="ChEBI" id="CHEBI:15377"/>
        <dbReference type="ChEBI" id="CHEBI:15378"/>
        <dbReference type="ChEBI" id="CHEBI:59874"/>
        <dbReference type="ChEBI" id="CHEBI:78442"/>
        <dbReference type="ChEBI" id="CHEBI:138191"/>
        <dbReference type="EC" id="3.1.1.29"/>
    </reaction>
</comment>
<comment type="subunit">
    <text evidence="1">Monomer.</text>
</comment>
<comment type="subcellular location">
    <subcellularLocation>
        <location evidence="1">Cytoplasm</location>
    </subcellularLocation>
</comment>
<comment type="similarity">
    <text evidence="1">Belongs to the PTH family.</text>
</comment>
<proteinExistence type="inferred from homology"/>
<dbReference type="EC" id="3.1.1.29" evidence="1"/>
<dbReference type="EMBL" id="CP000492">
    <property type="protein sequence ID" value="ABL65438.1"/>
    <property type="molecule type" value="Genomic_DNA"/>
</dbReference>
<dbReference type="RefSeq" id="WP_011745254.1">
    <property type="nucleotide sequence ID" value="NC_008639.1"/>
</dbReference>
<dbReference type="SMR" id="A1BGB1"/>
<dbReference type="STRING" id="290317.Cpha266_1409"/>
<dbReference type="KEGG" id="cph:Cpha266_1409"/>
<dbReference type="eggNOG" id="COG0193">
    <property type="taxonomic scope" value="Bacteria"/>
</dbReference>
<dbReference type="HOGENOM" id="CLU_062456_4_1_10"/>
<dbReference type="OrthoDB" id="9800507at2"/>
<dbReference type="Proteomes" id="UP000008701">
    <property type="component" value="Chromosome"/>
</dbReference>
<dbReference type="GO" id="GO:0005737">
    <property type="term" value="C:cytoplasm"/>
    <property type="evidence" value="ECO:0007669"/>
    <property type="project" value="UniProtKB-SubCell"/>
</dbReference>
<dbReference type="GO" id="GO:0004045">
    <property type="term" value="F:peptidyl-tRNA hydrolase activity"/>
    <property type="evidence" value="ECO:0007669"/>
    <property type="project" value="UniProtKB-UniRule"/>
</dbReference>
<dbReference type="GO" id="GO:0000049">
    <property type="term" value="F:tRNA binding"/>
    <property type="evidence" value="ECO:0007669"/>
    <property type="project" value="UniProtKB-UniRule"/>
</dbReference>
<dbReference type="GO" id="GO:0006515">
    <property type="term" value="P:protein quality control for misfolded or incompletely synthesized proteins"/>
    <property type="evidence" value="ECO:0007669"/>
    <property type="project" value="UniProtKB-UniRule"/>
</dbReference>
<dbReference type="GO" id="GO:0072344">
    <property type="term" value="P:rescue of stalled ribosome"/>
    <property type="evidence" value="ECO:0007669"/>
    <property type="project" value="UniProtKB-UniRule"/>
</dbReference>
<dbReference type="CDD" id="cd00462">
    <property type="entry name" value="PTH"/>
    <property type="match status" value="1"/>
</dbReference>
<dbReference type="FunFam" id="3.40.50.1470:FF:000001">
    <property type="entry name" value="Peptidyl-tRNA hydrolase"/>
    <property type="match status" value="1"/>
</dbReference>
<dbReference type="Gene3D" id="3.40.50.1470">
    <property type="entry name" value="Peptidyl-tRNA hydrolase"/>
    <property type="match status" value="1"/>
</dbReference>
<dbReference type="HAMAP" id="MF_00083">
    <property type="entry name" value="Pept_tRNA_hydro_bact"/>
    <property type="match status" value="1"/>
</dbReference>
<dbReference type="InterPro" id="IPR001328">
    <property type="entry name" value="Pept_tRNA_hydro"/>
</dbReference>
<dbReference type="InterPro" id="IPR018171">
    <property type="entry name" value="Pept_tRNA_hydro_CS"/>
</dbReference>
<dbReference type="InterPro" id="IPR036416">
    <property type="entry name" value="Pept_tRNA_hydro_sf"/>
</dbReference>
<dbReference type="NCBIfam" id="TIGR00447">
    <property type="entry name" value="pth"/>
    <property type="match status" value="1"/>
</dbReference>
<dbReference type="PANTHER" id="PTHR17224">
    <property type="entry name" value="PEPTIDYL-TRNA HYDROLASE"/>
    <property type="match status" value="1"/>
</dbReference>
<dbReference type="PANTHER" id="PTHR17224:SF1">
    <property type="entry name" value="PEPTIDYL-TRNA HYDROLASE"/>
    <property type="match status" value="1"/>
</dbReference>
<dbReference type="Pfam" id="PF01195">
    <property type="entry name" value="Pept_tRNA_hydro"/>
    <property type="match status" value="1"/>
</dbReference>
<dbReference type="SUPFAM" id="SSF53178">
    <property type="entry name" value="Peptidyl-tRNA hydrolase-like"/>
    <property type="match status" value="1"/>
</dbReference>
<dbReference type="PROSITE" id="PS01195">
    <property type="entry name" value="PEPT_TRNA_HYDROL_1"/>
    <property type="match status" value="1"/>
</dbReference>
<gene>
    <name evidence="1" type="primary">pth</name>
    <name type="ordered locus">Cpha266_1409</name>
</gene>
<sequence length="190" mass="20822">MKLVVGLGNPEPRYAGTRHNVGFDVLDTLAATFQTRFGKGKGNYLSTKISHRNRSVILLKPMTYMNLSGHAVVAAMNFYKVSESGLLIVCDDLNLPAGSIRLRAKGSAGGQNGLKHIIECLGSEGFARLRVGIRPLDRPLHSFSSFVLGKFTEEERIVMEKVIPVCREAALDVVVNGIEHAMNNYNKPII</sequence>
<accession>A1BGB1</accession>
<feature type="chain" id="PRO_1000010581" description="Peptidyl-tRNA hydrolase">
    <location>
        <begin position="1"/>
        <end position="190"/>
    </location>
</feature>
<feature type="active site" description="Proton acceptor" evidence="1">
    <location>
        <position position="19"/>
    </location>
</feature>
<feature type="binding site" evidence="1">
    <location>
        <position position="14"/>
    </location>
    <ligand>
        <name>tRNA</name>
        <dbReference type="ChEBI" id="CHEBI:17843"/>
    </ligand>
</feature>
<feature type="binding site" evidence="1">
    <location>
        <position position="64"/>
    </location>
    <ligand>
        <name>tRNA</name>
        <dbReference type="ChEBI" id="CHEBI:17843"/>
    </ligand>
</feature>
<feature type="binding site" evidence="1">
    <location>
        <position position="66"/>
    </location>
    <ligand>
        <name>tRNA</name>
        <dbReference type="ChEBI" id="CHEBI:17843"/>
    </ligand>
</feature>
<feature type="binding site" evidence="1">
    <location>
        <position position="112"/>
    </location>
    <ligand>
        <name>tRNA</name>
        <dbReference type="ChEBI" id="CHEBI:17843"/>
    </ligand>
</feature>
<feature type="site" description="Discriminates between blocked and unblocked aminoacyl-tRNA" evidence="1">
    <location>
        <position position="9"/>
    </location>
</feature>
<feature type="site" description="Stabilizes the basic form of H active site to accept a proton" evidence="1">
    <location>
        <position position="91"/>
    </location>
</feature>
<reference key="1">
    <citation type="submission" date="2006-12" db="EMBL/GenBank/DDBJ databases">
        <title>Complete sequence of Chlorobium phaeobacteroides DSM 266.</title>
        <authorList>
            <consortium name="US DOE Joint Genome Institute"/>
            <person name="Copeland A."/>
            <person name="Lucas S."/>
            <person name="Lapidus A."/>
            <person name="Barry K."/>
            <person name="Detter J.C."/>
            <person name="Glavina del Rio T."/>
            <person name="Hammon N."/>
            <person name="Israni S."/>
            <person name="Pitluck S."/>
            <person name="Goltsman E."/>
            <person name="Schmutz J."/>
            <person name="Larimer F."/>
            <person name="Land M."/>
            <person name="Hauser L."/>
            <person name="Mikhailova N."/>
            <person name="Li T."/>
            <person name="Overmann J."/>
            <person name="Bryant D.A."/>
            <person name="Richardson P."/>
        </authorList>
    </citation>
    <scope>NUCLEOTIDE SEQUENCE [LARGE SCALE GENOMIC DNA]</scope>
    <source>
        <strain>DSM 266 / SMG 266 / 2430</strain>
    </source>
</reference>
<protein>
    <recommendedName>
        <fullName evidence="1">Peptidyl-tRNA hydrolase</fullName>
        <shortName evidence="1">Pth</shortName>
        <ecNumber evidence="1">3.1.1.29</ecNumber>
    </recommendedName>
</protein>